<dbReference type="EC" id="3.1.-.-" evidence="1"/>
<dbReference type="EC" id="5.6.2.4" evidence="1"/>
<dbReference type="EMBL" id="AE014074">
    <property type="protein sequence ID" value="AAM79121.1"/>
    <property type="molecule type" value="Genomic_DNA"/>
</dbReference>
<dbReference type="SMR" id="P0CZ52"/>
<dbReference type="KEGG" id="spg:SpyM3_0514"/>
<dbReference type="HOGENOM" id="CLU_001114_3_1_9"/>
<dbReference type="Proteomes" id="UP000000564">
    <property type="component" value="Chromosome"/>
</dbReference>
<dbReference type="GO" id="GO:0005829">
    <property type="term" value="C:cytosol"/>
    <property type="evidence" value="ECO:0007669"/>
    <property type="project" value="TreeGrafter"/>
</dbReference>
<dbReference type="GO" id="GO:0033202">
    <property type="term" value="C:DNA helicase complex"/>
    <property type="evidence" value="ECO:0007669"/>
    <property type="project" value="TreeGrafter"/>
</dbReference>
<dbReference type="GO" id="GO:0043138">
    <property type="term" value="F:3'-5' DNA helicase activity"/>
    <property type="evidence" value="ECO:0007669"/>
    <property type="project" value="UniProtKB-UniRule"/>
</dbReference>
<dbReference type="GO" id="GO:0008408">
    <property type="term" value="F:3'-5' exonuclease activity"/>
    <property type="evidence" value="ECO:0007669"/>
    <property type="project" value="UniProtKB-UniRule"/>
</dbReference>
<dbReference type="GO" id="GO:0005524">
    <property type="term" value="F:ATP binding"/>
    <property type="evidence" value="ECO:0007669"/>
    <property type="project" value="UniProtKB-UniRule"/>
</dbReference>
<dbReference type="GO" id="GO:0016887">
    <property type="term" value="F:ATP hydrolysis activity"/>
    <property type="evidence" value="ECO:0007669"/>
    <property type="project" value="RHEA"/>
</dbReference>
<dbReference type="GO" id="GO:0003690">
    <property type="term" value="F:double-stranded DNA binding"/>
    <property type="evidence" value="ECO:0007669"/>
    <property type="project" value="UniProtKB-UniRule"/>
</dbReference>
<dbReference type="GO" id="GO:0000724">
    <property type="term" value="P:double-strand break repair via homologous recombination"/>
    <property type="evidence" value="ECO:0007669"/>
    <property type="project" value="UniProtKB-UniRule"/>
</dbReference>
<dbReference type="CDD" id="cd17932">
    <property type="entry name" value="DEXQc_UvrD"/>
    <property type="match status" value="1"/>
</dbReference>
<dbReference type="Gene3D" id="3.90.320.10">
    <property type="match status" value="1"/>
</dbReference>
<dbReference type="Gene3D" id="3.40.50.300">
    <property type="entry name" value="P-loop containing nucleotide triphosphate hydrolases"/>
    <property type="match status" value="4"/>
</dbReference>
<dbReference type="Gene3D" id="1.10.486.10">
    <property type="entry name" value="PCRA, domain 4"/>
    <property type="match status" value="1"/>
</dbReference>
<dbReference type="HAMAP" id="MF_01451">
    <property type="entry name" value="AddA"/>
    <property type="match status" value="1"/>
</dbReference>
<dbReference type="InterPro" id="IPR014152">
    <property type="entry name" value="AddA"/>
</dbReference>
<dbReference type="InterPro" id="IPR014017">
    <property type="entry name" value="DNA_helicase_UvrD-like_C"/>
</dbReference>
<dbReference type="InterPro" id="IPR000212">
    <property type="entry name" value="DNA_helicase_UvrD/REP"/>
</dbReference>
<dbReference type="InterPro" id="IPR027417">
    <property type="entry name" value="P-loop_NTPase"/>
</dbReference>
<dbReference type="InterPro" id="IPR011604">
    <property type="entry name" value="PDDEXK-like_dom_sf"/>
</dbReference>
<dbReference type="InterPro" id="IPR038726">
    <property type="entry name" value="PDDEXK_AddAB-type"/>
</dbReference>
<dbReference type="InterPro" id="IPR011335">
    <property type="entry name" value="Restrct_endonuc-II-like"/>
</dbReference>
<dbReference type="InterPro" id="IPR014016">
    <property type="entry name" value="UvrD-like_ATP-bd"/>
</dbReference>
<dbReference type="NCBIfam" id="TIGR02785">
    <property type="entry name" value="addA_Gpos"/>
    <property type="match status" value="1"/>
</dbReference>
<dbReference type="PANTHER" id="PTHR11070:SF48">
    <property type="entry name" value="ATP-DEPENDENT HELICASE_NUCLEASE SUBUNIT A"/>
    <property type="match status" value="1"/>
</dbReference>
<dbReference type="PANTHER" id="PTHR11070">
    <property type="entry name" value="UVRD / RECB / PCRA DNA HELICASE FAMILY MEMBER"/>
    <property type="match status" value="1"/>
</dbReference>
<dbReference type="Pfam" id="PF12705">
    <property type="entry name" value="PDDEXK_1"/>
    <property type="match status" value="1"/>
</dbReference>
<dbReference type="Pfam" id="PF00580">
    <property type="entry name" value="UvrD-helicase"/>
    <property type="match status" value="1"/>
</dbReference>
<dbReference type="Pfam" id="PF13361">
    <property type="entry name" value="UvrD_C"/>
    <property type="match status" value="1"/>
</dbReference>
<dbReference type="SUPFAM" id="SSF52540">
    <property type="entry name" value="P-loop containing nucleoside triphosphate hydrolases"/>
    <property type="match status" value="1"/>
</dbReference>
<dbReference type="SUPFAM" id="SSF52980">
    <property type="entry name" value="Restriction endonuclease-like"/>
    <property type="match status" value="1"/>
</dbReference>
<dbReference type="PROSITE" id="PS51198">
    <property type="entry name" value="UVRD_HELICASE_ATP_BIND"/>
    <property type="match status" value="1"/>
</dbReference>
<dbReference type="PROSITE" id="PS51217">
    <property type="entry name" value="UVRD_HELICASE_CTER"/>
    <property type="match status" value="1"/>
</dbReference>
<protein>
    <recommendedName>
        <fullName evidence="1">ATP-dependent helicase/nuclease subunit A</fullName>
        <ecNumber evidence="1">3.1.-.-</ecNumber>
        <ecNumber evidence="1">5.6.2.4</ecNumber>
    </recommendedName>
    <alternativeName>
        <fullName evidence="1">ATP-dependent helicase/nuclease AddA</fullName>
    </alternativeName>
    <alternativeName>
        <fullName evidence="1">DNA 3'-5' helicase AddA</fullName>
    </alternativeName>
</protein>
<evidence type="ECO:0000255" key="1">
    <source>
        <dbReference type="HAMAP-Rule" id="MF_01451"/>
    </source>
</evidence>
<sequence length="1222" mass="140346">MLFNINEKGEPLVISFAPFLSPEAIKHLQENERYSDQSQKRTAQQIEAIYTSGQNILVSASAGSGKTFVMVERILDKILRGVSIDRLFISTFTVKAATELRERIENKLYSQIAQTTDFQMKVYLTEQLQSLCQADIGTMDAFAQKVVSRYGYSIGISSQFRIMQDKAEQDVLKQEVFSKLFSEFMNQKEAPAFRALVKNFSGNCKDTSAFRELVYTCYSFSQSTENPKIWLQENFLSAAKTYQRLEDIPDHDIELLLLAMQDTANQLRDVTDMEDYGQLTKAGSRSAKYTKHLTIIEKLSDWVRDFKCLYGKAGLDRLIRDVTDLIPSGNDVTVSKVKYPVFKTLHQKLKQFRHLETILMYQKDCFPLLEQLQDFVFAFSEAYLAVKIQESAFEFSDIAHFAIKILEENTDIRQSYQQHYHEVMVDEYQDNNHMQERLLTLLSNGHNRFMVGDIKQSIYRFRQADPQIFNQKFRDYQKKPEQGKVILLKENFRSQSEVLNVSNAVFSHLMDESVGDVLYDEQHQLIAGSHAQTVPYLDRRAQLLLYNSDKDDGNAPSDSEGISFSEVTIVAKEIIKLHNDKGVPFEDITLLVSSRTRNDIISHTFNQYGIPIVTDGGQQNYLKSVEVMVMLDTLRTINNPRNDYALVALLRSPMFAFDEDDLARIALQKDNELDKDCLYDKMQRAVIGRGAHPELIHDTLLGKLNVFLKTLKSWRRYAKLGSLYDLIWKIFNDRFYFDFVASQAKAEQAQANLYALALRANQFEKSGYKGLYRFIKMIDKVLETQNDLADVEVAAPKQAVNLMTIHKSKGLQFPYVFILNCDKRFSMTDIHKSFILNRQHGIGIKYLADIKGLLGETTLNSVKVSMETLPYQLNKQELRLATLSEQMRLLYVAMTRAEKKVYFIGKASKSKSQEITDPKKLGKLLPLALREQLLTFQDWLLAIADIFSTEDLYFDVRFIEDSDLTQESVGRLQTPQLLNPDDLKDNRQSETIARALDMLEAVSQLNANYEAAIHLPTVRTPSQLKAAYEPLLEPIGVDIIEKSSRSLSDFTLPHFSKKAKVEASHIGSALHQLMQVLPLSKPINQQTLLDALRGIDSNEEVKTALDLKKIESFFCDTSLGQFFQTYQKHLYREAPFAILKVDPISQEEYVLRGIIDAYFLFDDHIVLVDYKTDKYKQPIELKKRYQQQLELYAEALTQTYKLPVTKRYLVLMGGGKPEIVEV</sequence>
<proteinExistence type="inferred from homology"/>
<comment type="function">
    <text evidence="1">The heterodimer acts as both an ATP-dependent DNA helicase and an ATP-dependent, dual-direction single-stranded exonuclease. Recognizes the chi site generating a DNA molecule suitable for the initiation of homologous recombination. The AddA nuclease domain is required for chi fragment generation; this subunit has the helicase and 3' -&gt; 5' nuclease activities.</text>
</comment>
<comment type="catalytic activity">
    <reaction evidence="1">
        <text>Couples ATP hydrolysis with the unwinding of duplex DNA by translocating in the 3'-5' direction.</text>
        <dbReference type="EC" id="5.6.2.4"/>
    </reaction>
</comment>
<comment type="catalytic activity">
    <reaction evidence="1">
        <text>ATP + H2O = ADP + phosphate + H(+)</text>
        <dbReference type="Rhea" id="RHEA:13065"/>
        <dbReference type="ChEBI" id="CHEBI:15377"/>
        <dbReference type="ChEBI" id="CHEBI:15378"/>
        <dbReference type="ChEBI" id="CHEBI:30616"/>
        <dbReference type="ChEBI" id="CHEBI:43474"/>
        <dbReference type="ChEBI" id="CHEBI:456216"/>
        <dbReference type="EC" id="5.6.2.4"/>
    </reaction>
</comment>
<comment type="cofactor">
    <cofactor evidence="1">
        <name>Mg(2+)</name>
        <dbReference type="ChEBI" id="CHEBI:18420"/>
    </cofactor>
</comment>
<comment type="subunit">
    <text evidence="1">Heterodimer of AddA and AddB/RexB.</text>
</comment>
<comment type="similarity">
    <text evidence="1">Belongs to the helicase family. AddA subfamily.</text>
</comment>
<accession>P0CZ52</accession>
<accession>Q878I0</accession>
<accession>Q8K815</accession>
<keyword id="KW-0067">ATP-binding</keyword>
<keyword id="KW-0227">DNA damage</keyword>
<keyword id="KW-0234">DNA repair</keyword>
<keyword id="KW-0238">DNA-binding</keyword>
<keyword id="KW-0269">Exonuclease</keyword>
<keyword id="KW-0347">Helicase</keyword>
<keyword id="KW-0378">Hydrolase</keyword>
<keyword id="KW-0413">Isomerase</keyword>
<keyword id="KW-0540">Nuclease</keyword>
<keyword id="KW-0547">Nucleotide-binding</keyword>
<organism>
    <name type="scientific">Streptococcus pyogenes serotype M3 (strain ATCC BAA-595 / MGAS315)</name>
    <dbReference type="NCBI Taxonomy" id="198466"/>
    <lineage>
        <taxon>Bacteria</taxon>
        <taxon>Bacillati</taxon>
        <taxon>Bacillota</taxon>
        <taxon>Bacilli</taxon>
        <taxon>Lactobacillales</taxon>
        <taxon>Streptococcaceae</taxon>
        <taxon>Streptococcus</taxon>
    </lineage>
</organism>
<reference key="1">
    <citation type="journal article" date="2002" name="Proc. Natl. Acad. Sci. U.S.A.">
        <title>Genome sequence of a serotype M3 strain of group A Streptococcus: phage-encoded toxins, the high-virulence phenotype, and clone emergence.</title>
        <authorList>
            <person name="Beres S.B."/>
            <person name="Sylva G.L."/>
            <person name="Barbian K.D."/>
            <person name="Lei B."/>
            <person name="Hoff J.S."/>
            <person name="Mammarella N.D."/>
            <person name="Liu M.-Y."/>
            <person name="Smoot J.C."/>
            <person name="Porcella S.F."/>
            <person name="Parkins L.D."/>
            <person name="Campbell D.S."/>
            <person name="Smith T.M."/>
            <person name="McCormick J.K."/>
            <person name="Leung D.Y.M."/>
            <person name="Schlievert P.M."/>
            <person name="Musser J.M."/>
        </authorList>
    </citation>
    <scope>NUCLEOTIDE SEQUENCE [LARGE SCALE GENOMIC DNA]</scope>
    <source>
        <strain>ATCC BAA-595 / MGAS315</strain>
    </source>
</reference>
<name>ADDA_STRP3</name>
<feature type="chain" id="PRO_0000379346" description="ATP-dependent helicase/nuclease subunit A">
    <location>
        <begin position="1"/>
        <end position="1222"/>
    </location>
</feature>
<feature type="domain" description="UvrD-like helicase ATP-binding" evidence="1">
    <location>
        <begin position="39"/>
        <end position="495"/>
    </location>
</feature>
<feature type="domain" description="UvrD-like helicase C-terminal" evidence="1">
    <location>
        <begin position="524"/>
        <end position="810"/>
    </location>
</feature>
<feature type="binding site" evidence="1">
    <location>
        <begin position="60"/>
        <end position="67"/>
    </location>
    <ligand>
        <name>ATP</name>
        <dbReference type="ChEBI" id="CHEBI:30616"/>
    </ligand>
</feature>
<gene>
    <name evidence="1" type="primary">addA</name>
    <name type="synonym">rexA</name>
    <name type="ordered locus">SpyM3_0514</name>
</gene>